<dbReference type="EC" id="3.2.2.23" evidence="2"/>
<dbReference type="EC" id="4.2.99.18" evidence="2"/>
<dbReference type="EMBL" id="CP000283">
    <property type="protein sequence ID" value="ABE37452.1"/>
    <property type="molecule type" value="Genomic_DNA"/>
</dbReference>
<dbReference type="SMR" id="Q13EN7"/>
<dbReference type="STRING" id="316057.RPD_0212"/>
<dbReference type="KEGG" id="rpd:RPD_0212"/>
<dbReference type="eggNOG" id="COG0266">
    <property type="taxonomic scope" value="Bacteria"/>
</dbReference>
<dbReference type="HOGENOM" id="CLU_038423_1_1_5"/>
<dbReference type="BioCyc" id="RPAL316057:RPD_RS01075-MONOMER"/>
<dbReference type="Proteomes" id="UP000001818">
    <property type="component" value="Chromosome"/>
</dbReference>
<dbReference type="GO" id="GO:0034039">
    <property type="term" value="F:8-oxo-7,8-dihydroguanine DNA N-glycosylase activity"/>
    <property type="evidence" value="ECO:0007669"/>
    <property type="project" value="TreeGrafter"/>
</dbReference>
<dbReference type="GO" id="GO:0140078">
    <property type="term" value="F:class I DNA-(apurinic or apyrimidinic site) endonuclease activity"/>
    <property type="evidence" value="ECO:0007669"/>
    <property type="project" value="UniProtKB-EC"/>
</dbReference>
<dbReference type="GO" id="GO:0003684">
    <property type="term" value="F:damaged DNA binding"/>
    <property type="evidence" value="ECO:0007669"/>
    <property type="project" value="InterPro"/>
</dbReference>
<dbReference type="GO" id="GO:0008270">
    <property type="term" value="F:zinc ion binding"/>
    <property type="evidence" value="ECO:0007669"/>
    <property type="project" value="UniProtKB-UniRule"/>
</dbReference>
<dbReference type="GO" id="GO:0006284">
    <property type="term" value="P:base-excision repair"/>
    <property type="evidence" value="ECO:0007669"/>
    <property type="project" value="InterPro"/>
</dbReference>
<dbReference type="CDD" id="cd08966">
    <property type="entry name" value="EcFpg-like_N"/>
    <property type="match status" value="1"/>
</dbReference>
<dbReference type="FunFam" id="1.10.8.50:FF:000003">
    <property type="entry name" value="Formamidopyrimidine-DNA glycosylase"/>
    <property type="match status" value="1"/>
</dbReference>
<dbReference type="Gene3D" id="1.10.8.50">
    <property type="match status" value="1"/>
</dbReference>
<dbReference type="Gene3D" id="3.20.190.10">
    <property type="entry name" value="MutM-like, N-terminal"/>
    <property type="match status" value="1"/>
</dbReference>
<dbReference type="HAMAP" id="MF_00103">
    <property type="entry name" value="Fapy_DNA_glycosyl"/>
    <property type="match status" value="1"/>
</dbReference>
<dbReference type="InterPro" id="IPR015886">
    <property type="entry name" value="DNA_glyclase/AP_lyase_DNA-bd"/>
</dbReference>
<dbReference type="InterPro" id="IPR015887">
    <property type="entry name" value="DNA_glyclase_Znf_dom_DNA_BS"/>
</dbReference>
<dbReference type="InterPro" id="IPR020629">
    <property type="entry name" value="Formamido-pyr_DNA_Glyclase"/>
</dbReference>
<dbReference type="InterPro" id="IPR012319">
    <property type="entry name" value="FPG_cat"/>
</dbReference>
<dbReference type="InterPro" id="IPR035937">
    <property type="entry name" value="MutM-like_N-ter"/>
</dbReference>
<dbReference type="InterPro" id="IPR010979">
    <property type="entry name" value="Ribosomal_uS13-like_H2TH"/>
</dbReference>
<dbReference type="InterPro" id="IPR000214">
    <property type="entry name" value="Znf_DNA_glyclase/AP_lyase"/>
</dbReference>
<dbReference type="NCBIfam" id="TIGR00577">
    <property type="entry name" value="fpg"/>
    <property type="match status" value="1"/>
</dbReference>
<dbReference type="NCBIfam" id="NF002211">
    <property type="entry name" value="PRK01103.1"/>
    <property type="match status" value="1"/>
</dbReference>
<dbReference type="PANTHER" id="PTHR22993">
    <property type="entry name" value="FORMAMIDOPYRIMIDINE-DNA GLYCOSYLASE"/>
    <property type="match status" value="1"/>
</dbReference>
<dbReference type="PANTHER" id="PTHR22993:SF9">
    <property type="entry name" value="FORMAMIDOPYRIMIDINE-DNA GLYCOSYLASE"/>
    <property type="match status" value="1"/>
</dbReference>
<dbReference type="Pfam" id="PF01149">
    <property type="entry name" value="Fapy_DNA_glyco"/>
    <property type="match status" value="1"/>
</dbReference>
<dbReference type="Pfam" id="PF06831">
    <property type="entry name" value="H2TH"/>
    <property type="match status" value="1"/>
</dbReference>
<dbReference type="SMART" id="SM00898">
    <property type="entry name" value="Fapy_DNA_glyco"/>
    <property type="match status" value="1"/>
</dbReference>
<dbReference type="SMART" id="SM01232">
    <property type="entry name" value="H2TH"/>
    <property type="match status" value="1"/>
</dbReference>
<dbReference type="SUPFAM" id="SSF57716">
    <property type="entry name" value="Glucocorticoid receptor-like (DNA-binding domain)"/>
    <property type="match status" value="1"/>
</dbReference>
<dbReference type="SUPFAM" id="SSF81624">
    <property type="entry name" value="N-terminal domain of MutM-like DNA repair proteins"/>
    <property type="match status" value="1"/>
</dbReference>
<dbReference type="SUPFAM" id="SSF46946">
    <property type="entry name" value="S13-like H2TH domain"/>
    <property type="match status" value="1"/>
</dbReference>
<dbReference type="PROSITE" id="PS51068">
    <property type="entry name" value="FPG_CAT"/>
    <property type="match status" value="1"/>
</dbReference>
<dbReference type="PROSITE" id="PS01242">
    <property type="entry name" value="ZF_FPG_1"/>
    <property type="match status" value="1"/>
</dbReference>
<dbReference type="PROSITE" id="PS51066">
    <property type="entry name" value="ZF_FPG_2"/>
    <property type="match status" value="1"/>
</dbReference>
<reference key="1">
    <citation type="submission" date="2006-03" db="EMBL/GenBank/DDBJ databases">
        <title>Complete sequence of Rhodopseudomonas palustris BisB5.</title>
        <authorList>
            <consortium name="US DOE Joint Genome Institute"/>
            <person name="Copeland A."/>
            <person name="Lucas S."/>
            <person name="Lapidus A."/>
            <person name="Barry K."/>
            <person name="Detter J.C."/>
            <person name="Glavina del Rio T."/>
            <person name="Hammon N."/>
            <person name="Israni S."/>
            <person name="Dalin E."/>
            <person name="Tice H."/>
            <person name="Pitluck S."/>
            <person name="Chain P."/>
            <person name="Malfatti S."/>
            <person name="Shin M."/>
            <person name="Vergez L."/>
            <person name="Schmutz J."/>
            <person name="Larimer F."/>
            <person name="Land M."/>
            <person name="Hauser L."/>
            <person name="Pelletier D.A."/>
            <person name="Kyrpides N."/>
            <person name="Lykidis A."/>
            <person name="Oda Y."/>
            <person name="Harwood C.S."/>
            <person name="Richardson P."/>
        </authorList>
    </citation>
    <scope>NUCLEOTIDE SEQUENCE [LARGE SCALE GENOMIC DNA]</scope>
    <source>
        <strain>BisB5</strain>
    </source>
</reference>
<organism>
    <name type="scientific">Rhodopseudomonas palustris (strain BisB5)</name>
    <dbReference type="NCBI Taxonomy" id="316057"/>
    <lineage>
        <taxon>Bacteria</taxon>
        <taxon>Pseudomonadati</taxon>
        <taxon>Pseudomonadota</taxon>
        <taxon>Alphaproteobacteria</taxon>
        <taxon>Hyphomicrobiales</taxon>
        <taxon>Nitrobacteraceae</taxon>
        <taxon>Rhodopseudomonas</taxon>
    </lineage>
</organism>
<proteinExistence type="inferred from homology"/>
<name>FPG_RHOPS</name>
<comment type="function">
    <text evidence="2">Involved in base excision repair of DNA damaged by oxidation or by mutagenic agents. Acts as a DNA glycosylase that recognizes and removes damaged bases. Has a preference for oxidized purines, such as 7,8-dihydro-8-oxoguanine (8-oxoG). Has AP (apurinic/apyrimidinic) lyase activity and introduces nicks in the DNA strand. Cleaves the DNA backbone by beta-delta elimination to generate a single-strand break at the site of the removed base with both 3'- and 5'-phosphates.</text>
</comment>
<comment type="catalytic activity">
    <reaction evidence="2">
        <text>Hydrolysis of DNA containing ring-opened 7-methylguanine residues, releasing 2,6-diamino-4-hydroxy-5-(N-methyl)formamidopyrimidine.</text>
        <dbReference type="EC" id="3.2.2.23"/>
    </reaction>
</comment>
<comment type="catalytic activity">
    <reaction evidence="2">
        <text>2'-deoxyribonucleotide-(2'-deoxyribose 5'-phosphate)-2'-deoxyribonucleotide-DNA = a 3'-end 2'-deoxyribonucleotide-(2,3-dehydro-2,3-deoxyribose 5'-phosphate)-DNA + a 5'-end 5'-phospho-2'-deoxyribonucleoside-DNA + H(+)</text>
        <dbReference type="Rhea" id="RHEA:66592"/>
        <dbReference type="Rhea" id="RHEA-COMP:13180"/>
        <dbReference type="Rhea" id="RHEA-COMP:16897"/>
        <dbReference type="Rhea" id="RHEA-COMP:17067"/>
        <dbReference type="ChEBI" id="CHEBI:15378"/>
        <dbReference type="ChEBI" id="CHEBI:136412"/>
        <dbReference type="ChEBI" id="CHEBI:157695"/>
        <dbReference type="ChEBI" id="CHEBI:167181"/>
        <dbReference type="EC" id="4.2.99.18"/>
    </reaction>
</comment>
<comment type="cofactor">
    <cofactor evidence="2">
        <name>Zn(2+)</name>
        <dbReference type="ChEBI" id="CHEBI:29105"/>
    </cofactor>
    <text evidence="2">Binds 1 zinc ion per subunit.</text>
</comment>
<comment type="subunit">
    <text evidence="2">Monomer.</text>
</comment>
<comment type="similarity">
    <text evidence="2">Belongs to the FPG family.</text>
</comment>
<evidence type="ECO:0000250" key="1"/>
<evidence type="ECO:0000255" key="2">
    <source>
        <dbReference type="HAMAP-Rule" id="MF_00103"/>
    </source>
</evidence>
<gene>
    <name evidence="2" type="primary">mutM</name>
    <name evidence="2" type="synonym">fpg</name>
    <name type="ordered locus">RPD_0212</name>
</gene>
<sequence length="293" mass="32108">MPELPEVETVRLGLTPAMEGFRIARAVTNRDDLRFPLQKDFVARLTGQIVTGLGRRAKYLLADLASGDVLLMHLGMSGSFRVVAADGAHTPGEFHHPRSEDRTHDHVVFDMSSGARVIFNDPRRFGFMKIFPRAAIDDEPHLKGLGPEPLGNAFDAVMLARACAGKQTSLKAALLDQRVVAGLGNIYVCEALWRAHLSPKRKAATLANRKNEPTDHALRLTDAIRAVLGDAIKAGGSSLRDHRQTSGELGYFQHSFAAYDREGERCRTDGCGGAVKRFVQNGRSTFWCSGCQK</sequence>
<feature type="initiator methionine" description="Removed" evidence="1">
    <location>
        <position position="1"/>
    </location>
</feature>
<feature type="chain" id="PRO_1000008756" description="Formamidopyrimidine-DNA glycosylase">
    <location>
        <begin position="2"/>
        <end position="293"/>
    </location>
</feature>
<feature type="zinc finger region" description="FPG-type" evidence="2">
    <location>
        <begin position="257"/>
        <end position="293"/>
    </location>
</feature>
<feature type="active site" description="Schiff-base intermediate with DNA" evidence="2">
    <location>
        <position position="2"/>
    </location>
</feature>
<feature type="active site" description="Proton donor" evidence="2">
    <location>
        <position position="3"/>
    </location>
</feature>
<feature type="active site" description="Proton donor; for beta-elimination activity" evidence="2">
    <location>
        <position position="58"/>
    </location>
</feature>
<feature type="active site" description="Proton donor; for delta-elimination activity" evidence="2">
    <location>
        <position position="283"/>
    </location>
</feature>
<feature type="binding site" evidence="2">
    <location>
        <position position="104"/>
    </location>
    <ligand>
        <name>DNA</name>
        <dbReference type="ChEBI" id="CHEBI:16991"/>
    </ligand>
</feature>
<feature type="binding site" evidence="2">
    <location>
        <position position="123"/>
    </location>
    <ligand>
        <name>DNA</name>
        <dbReference type="ChEBI" id="CHEBI:16991"/>
    </ligand>
</feature>
<feature type="binding site" evidence="2">
    <location>
        <position position="166"/>
    </location>
    <ligand>
        <name>DNA</name>
        <dbReference type="ChEBI" id="CHEBI:16991"/>
    </ligand>
</feature>
<keyword id="KW-0227">DNA damage</keyword>
<keyword id="KW-0234">DNA repair</keyword>
<keyword id="KW-0238">DNA-binding</keyword>
<keyword id="KW-0326">Glycosidase</keyword>
<keyword id="KW-0378">Hydrolase</keyword>
<keyword id="KW-0456">Lyase</keyword>
<keyword id="KW-0479">Metal-binding</keyword>
<keyword id="KW-0511">Multifunctional enzyme</keyword>
<keyword id="KW-0862">Zinc</keyword>
<keyword id="KW-0863">Zinc-finger</keyword>
<accession>Q13EN7</accession>
<protein>
    <recommendedName>
        <fullName evidence="2">Formamidopyrimidine-DNA glycosylase</fullName>
        <shortName evidence="2">Fapy-DNA glycosylase</shortName>
        <ecNumber evidence="2">3.2.2.23</ecNumber>
    </recommendedName>
    <alternativeName>
        <fullName evidence="2">DNA-(apurinic or apyrimidinic site) lyase MutM</fullName>
        <shortName evidence="2">AP lyase MutM</shortName>
        <ecNumber evidence="2">4.2.99.18</ecNumber>
    </alternativeName>
</protein>